<gene>
    <name type="primary">Fbxl8</name>
    <name type="synonym">Fbl8</name>
</gene>
<name>FBXL8_MOUSE</name>
<proteinExistence type="evidence at protein level"/>
<accession>Q8CIG9</accession>
<accession>Q9QZN7</accession>
<feature type="chain" id="PRO_0000119851" description="F-box/LRR-repeat protein 8">
    <location>
        <begin position="1"/>
        <end position="374"/>
    </location>
</feature>
<feature type="domain" description="F-box" evidence="2">
    <location>
        <begin position="2"/>
        <end position="48"/>
    </location>
</feature>
<feature type="sequence conflict" description="In Ref. 1; AAF09132." evidence="4" ref="1">
    <original>T</original>
    <variation>N</variation>
    <location>
        <position position="288"/>
    </location>
</feature>
<feature type="sequence conflict" description="In Ref. 1; AAF09132." evidence="4" ref="1">
    <original>A</original>
    <variation>D</variation>
    <location>
        <position position="300"/>
    </location>
</feature>
<dbReference type="EMBL" id="AF176523">
    <property type="protein sequence ID" value="AAF09132.1"/>
    <property type="molecule type" value="mRNA"/>
</dbReference>
<dbReference type="EMBL" id="BC023902">
    <property type="protein sequence ID" value="AAH23902.1"/>
    <property type="molecule type" value="mRNA"/>
</dbReference>
<dbReference type="CCDS" id="CCDS22595.1"/>
<dbReference type="RefSeq" id="NP_056636.2">
    <property type="nucleotide sequence ID" value="NM_015821.2"/>
</dbReference>
<dbReference type="SMR" id="Q8CIG9"/>
<dbReference type="BioGRID" id="206120">
    <property type="interactions" value="1"/>
</dbReference>
<dbReference type="FunCoup" id="Q8CIG9">
    <property type="interactions" value="37"/>
</dbReference>
<dbReference type="STRING" id="10090.ENSMUSP00000038638"/>
<dbReference type="PaxDb" id="10090-ENSMUSP00000038638"/>
<dbReference type="ProteomicsDB" id="267360"/>
<dbReference type="Pumba" id="Q8CIG9"/>
<dbReference type="DNASU" id="50788"/>
<dbReference type="Ensembl" id="ENSMUST00000036221.12">
    <property type="protein sequence ID" value="ENSMUSP00000038638.6"/>
    <property type="gene ID" value="ENSMUSG00000033313.12"/>
</dbReference>
<dbReference type="GeneID" id="50788"/>
<dbReference type="KEGG" id="mmu:50788"/>
<dbReference type="UCSC" id="uc009nbz.2">
    <property type="organism name" value="mouse"/>
</dbReference>
<dbReference type="AGR" id="MGI:1354697"/>
<dbReference type="CTD" id="55336"/>
<dbReference type="MGI" id="MGI:1354697">
    <property type="gene designation" value="Fbxl8"/>
</dbReference>
<dbReference type="VEuPathDB" id="HostDB:ENSMUSG00000033313"/>
<dbReference type="eggNOG" id="ENOG502QU59">
    <property type="taxonomic scope" value="Eukaryota"/>
</dbReference>
<dbReference type="GeneTree" id="ENSGT00420000029943"/>
<dbReference type="HOGENOM" id="CLU_062031_1_0_1"/>
<dbReference type="InParanoid" id="Q8CIG9"/>
<dbReference type="OMA" id="SCDCERE"/>
<dbReference type="OrthoDB" id="3219396at2759"/>
<dbReference type="PhylomeDB" id="Q8CIG9"/>
<dbReference type="TreeFam" id="TF321665"/>
<dbReference type="Reactome" id="R-MMU-8951664">
    <property type="pathway name" value="Neddylation"/>
</dbReference>
<dbReference type="Reactome" id="R-MMU-983168">
    <property type="pathway name" value="Antigen processing: Ubiquitination &amp; Proteasome degradation"/>
</dbReference>
<dbReference type="BioGRID-ORCS" id="50788">
    <property type="hits" value="3 hits in 77 CRISPR screens"/>
</dbReference>
<dbReference type="ChiTaRS" id="Fbxl8">
    <property type="organism name" value="mouse"/>
</dbReference>
<dbReference type="PRO" id="PR:Q8CIG9"/>
<dbReference type="Proteomes" id="UP000000589">
    <property type="component" value="Chromosome 8"/>
</dbReference>
<dbReference type="RNAct" id="Q8CIG9">
    <property type="molecule type" value="protein"/>
</dbReference>
<dbReference type="Bgee" id="ENSMUSG00000033313">
    <property type="expression patterns" value="Expressed in granulocyte and 75 other cell types or tissues"/>
</dbReference>
<dbReference type="ExpressionAtlas" id="Q8CIG9">
    <property type="expression patterns" value="baseline and differential"/>
</dbReference>
<dbReference type="FunFam" id="3.80.10.10:FF:000260">
    <property type="entry name" value="F-box/LRR-repeat protein 8"/>
    <property type="match status" value="1"/>
</dbReference>
<dbReference type="Gene3D" id="1.20.1280.50">
    <property type="match status" value="1"/>
</dbReference>
<dbReference type="Gene3D" id="3.80.10.10">
    <property type="entry name" value="Ribonuclease Inhibitor"/>
    <property type="match status" value="1"/>
</dbReference>
<dbReference type="InterPro" id="IPR036047">
    <property type="entry name" value="F-box-like_dom_sf"/>
</dbReference>
<dbReference type="InterPro" id="IPR001810">
    <property type="entry name" value="F-box_dom"/>
</dbReference>
<dbReference type="InterPro" id="IPR032675">
    <property type="entry name" value="LRR_dom_sf"/>
</dbReference>
<dbReference type="PANTHER" id="PTHR20872">
    <property type="match status" value="1"/>
</dbReference>
<dbReference type="PANTHER" id="PTHR20872:SF1">
    <property type="entry name" value="F-BOX DOMAIN-CONTAINING PROTEIN"/>
    <property type="match status" value="1"/>
</dbReference>
<dbReference type="Pfam" id="PF12937">
    <property type="entry name" value="F-box-like"/>
    <property type="match status" value="1"/>
</dbReference>
<dbReference type="SMART" id="SM00256">
    <property type="entry name" value="FBOX"/>
    <property type="match status" value="1"/>
</dbReference>
<dbReference type="SUPFAM" id="SSF81383">
    <property type="entry name" value="F-box domain"/>
    <property type="match status" value="1"/>
</dbReference>
<dbReference type="SUPFAM" id="SSF52047">
    <property type="entry name" value="RNI-like"/>
    <property type="match status" value="1"/>
</dbReference>
<dbReference type="PROSITE" id="PS50181">
    <property type="entry name" value="FBOX"/>
    <property type="match status" value="1"/>
</dbReference>
<comment type="function">
    <text evidence="1">Substrate-recognition component of the SCF (SKP1-CUL1-F-box protein)-type E3 ubiquitin ligase complex.</text>
</comment>
<comment type="subunit">
    <text evidence="1">Directly interacts with SKP1 and CUL1.</text>
</comment>
<comment type="tissue specificity">
    <text evidence="3">Widely expressed during embryogenesis and in adult tissues.</text>
</comment>
<comment type="caution">
    <text evidence="4">While the gene symbol and protein names are indicative of the presence of LRR repeats, such repeats are not present in this protein.</text>
</comment>
<protein>
    <recommendedName>
        <fullName>F-box/LRR-repeat protein 8</fullName>
    </recommendedName>
    <alternativeName>
        <fullName>F-box and leucine-rich repeat protein 8</fullName>
    </alternativeName>
    <alternativeName>
        <fullName>F-box protein FBL8</fullName>
    </alternativeName>
</protein>
<reference key="1">
    <citation type="journal article" date="1999" name="Curr. Biol.">
        <title>A family of mammalian F-box proteins.</title>
        <authorList>
            <person name="Winston J.T."/>
            <person name="Koepp D.M."/>
            <person name="Zhu C."/>
            <person name="Elledge S.J."/>
            <person name="Harper J.W."/>
        </authorList>
    </citation>
    <scope>NUCLEOTIDE SEQUENCE [MRNA]</scope>
    <scope>INTERACTION WITH SKP1</scope>
    <scope>TISSUE SPECIFICITY</scope>
</reference>
<reference key="2">
    <citation type="journal article" date="2004" name="Genome Res.">
        <title>The status, quality, and expansion of the NIH full-length cDNA project: the Mammalian Gene Collection (MGC).</title>
        <authorList>
            <consortium name="The MGC Project Team"/>
        </authorList>
    </citation>
    <scope>NUCLEOTIDE SEQUENCE [LARGE SCALE MRNA]</scope>
    <source>
        <strain>FVB/N</strain>
    </source>
</reference>
<sequence>MGELVDNLPEEVLALIFRDLPLRDLAVATRVCRAWAAAAANSTVWSDKSISCDCELEDLLPPYLSSCLDHIHNLRLEYEPSKKPSRGTATELLTALASRAPRLRGLRLECRGEKPLFDAGQDILGAVHAVCGAAHQLRHLDLRHLPYTLDDTLVLKAAAGCPELRSLFLDNHALVNSVQPTSVLKLLEACPHLRALGLHLASMSRAALELLAAPHRSPFALLALRCACPEDARASPLPDEAWATLSCRHPGLEVELELEPVLPDEAVTRILQPAVPVAVLRLNLSGDTVGPVRFATRHYAETLRALEVRASASPELHTALEELAARCAGLREIHCFCVVRPSVLDAFRAHCPRLRSYTLKLKREPHPWRPTLVR</sequence>
<organism>
    <name type="scientific">Mus musculus</name>
    <name type="common">Mouse</name>
    <dbReference type="NCBI Taxonomy" id="10090"/>
    <lineage>
        <taxon>Eukaryota</taxon>
        <taxon>Metazoa</taxon>
        <taxon>Chordata</taxon>
        <taxon>Craniata</taxon>
        <taxon>Vertebrata</taxon>
        <taxon>Euteleostomi</taxon>
        <taxon>Mammalia</taxon>
        <taxon>Eutheria</taxon>
        <taxon>Euarchontoglires</taxon>
        <taxon>Glires</taxon>
        <taxon>Rodentia</taxon>
        <taxon>Myomorpha</taxon>
        <taxon>Muroidea</taxon>
        <taxon>Muridae</taxon>
        <taxon>Murinae</taxon>
        <taxon>Mus</taxon>
        <taxon>Mus</taxon>
    </lineage>
</organism>
<keyword id="KW-1185">Reference proteome</keyword>
<keyword id="KW-0833">Ubl conjugation pathway</keyword>
<evidence type="ECO:0000250" key="1"/>
<evidence type="ECO:0000255" key="2">
    <source>
        <dbReference type="PROSITE-ProRule" id="PRU00080"/>
    </source>
</evidence>
<evidence type="ECO:0000269" key="3">
    <source>
    </source>
</evidence>
<evidence type="ECO:0000305" key="4"/>